<name>MATK_ERYRE</name>
<gene>
    <name evidence="1" type="primary">matK</name>
</gene>
<geneLocation type="chloroplast"/>
<feature type="chain" id="PRO_0000143379" description="Maturase K">
    <location>
        <begin position="1"/>
        <end position="514"/>
    </location>
</feature>
<accession>Q85WL0</accession>
<protein>
    <recommendedName>
        <fullName evidence="1">Maturase K</fullName>
    </recommendedName>
    <alternativeName>
        <fullName evidence="1">Intron maturase</fullName>
    </alternativeName>
</protein>
<dbReference type="EMBL" id="AF485315">
    <property type="protein sequence ID" value="AAO49066.1"/>
    <property type="molecule type" value="Genomic_DNA"/>
</dbReference>
<dbReference type="GO" id="GO:0009507">
    <property type="term" value="C:chloroplast"/>
    <property type="evidence" value="ECO:0007669"/>
    <property type="project" value="UniProtKB-SubCell"/>
</dbReference>
<dbReference type="GO" id="GO:0003723">
    <property type="term" value="F:RNA binding"/>
    <property type="evidence" value="ECO:0007669"/>
    <property type="project" value="UniProtKB-KW"/>
</dbReference>
<dbReference type="GO" id="GO:0006397">
    <property type="term" value="P:mRNA processing"/>
    <property type="evidence" value="ECO:0007669"/>
    <property type="project" value="UniProtKB-KW"/>
</dbReference>
<dbReference type="GO" id="GO:0008380">
    <property type="term" value="P:RNA splicing"/>
    <property type="evidence" value="ECO:0007669"/>
    <property type="project" value="UniProtKB-UniRule"/>
</dbReference>
<dbReference type="GO" id="GO:0008033">
    <property type="term" value="P:tRNA processing"/>
    <property type="evidence" value="ECO:0007669"/>
    <property type="project" value="UniProtKB-KW"/>
</dbReference>
<dbReference type="HAMAP" id="MF_01390">
    <property type="entry name" value="MatK"/>
    <property type="match status" value="1"/>
</dbReference>
<dbReference type="InterPro" id="IPR024937">
    <property type="entry name" value="Domain_X"/>
</dbReference>
<dbReference type="InterPro" id="IPR002866">
    <property type="entry name" value="Maturase_MatK"/>
</dbReference>
<dbReference type="InterPro" id="IPR024942">
    <property type="entry name" value="Maturase_MatK_N"/>
</dbReference>
<dbReference type="PANTHER" id="PTHR34811">
    <property type="entry name" value="MATURASE K"/>
    <property type="match status" value="1"/>
</dbReference>
<dbReference type="PANTHER" id="PTHR34811:SF1">
    <property type="entry name" value="MATURASE K"/>
    <property type="match status" value="1"/>
</dbReference>
<dbReference type="Pfam" id="PF01348">
    <property type="entry name" value="Intron_maturas2"/>
    <property type="match status" value="1"/>
</dbReference>
<dbReference type="Pfam" id="PF01824">
    <property type="entry name" value="MatK_N"/>
    <property type="match status" value="1"/>
</dbReference>
<evidence type="ECO:0000255" key="1">
    <source>
        <dbReference type="HAMAP-Rule" id="MF_01390"/>
    </source>
</evidence>
<sequence length="514" mass="61067">MEELQGYFKKARSLQQHFLYPLLLQEFIYTLAYDDGLKGSIFYEPIEFFGYDNKSSLVLIKRLITRMYQQNFLIYSVNDSNQNGLRGHINYFYSHFFYSHIVSEGFSVIVEIPFSLRLVSSPKEKEIPKSQNLRSIHSIFPFLEDKLSHLNNVSDILIPHPIHLEILVPILQYWIQDVPSLHLLRFFLHKYHNLNSFIQNNKTIYVFSKENKRLFWFLYNSYVSECEFLLVFLRKQSCYLRSTSSVAFLERSHFYGKMEHIIIVCCNNFQKTLWPFKDPFMHYVRYQGKAILASRGAHLLMKKWRYYLVNFWQYYFHFWSQPYRMHINPLLNYSFYFLGYLSSVLINPYAVKNKMLENSFLIDTVFKKFDTIIPIIPLIGSLSKAKFCTVSGHPISKPVWGDLSDFDIIDRFGRICRNLSHYHSGSSKKQSLYRIKYILRLSCARTLARKHKSTARALLQRLGSGLLEEFFTEEEQVLSFIFPKTTPFPLHGSHKERIWSLDIIRVNDLVNQII</sequence>
<reference key="1">
    <citation type="journal article" date="2003" name="Syst. Bot.">
        <title>Phylogeny and biogeography of Erythronium (Liliaceae) inferred from chloroplast matK and nuclear rDNA ITS sequences.</title>
        <authorList>
            <person name="Allen G.A."/>
            <person name="Soltis D.E."/>
            <person name="Soltis P.S."/>
        </authorList>
        <dbReference type="AGRICOLA" id="IND43643427"/>
    </citation>
    <scope>NUCLEOTIDE SEQUENCE [GENOMIC DNA]</scope>
</reference>
<organism>
    <name type="scientific">Erythronium revolutum</name>
    <name type="common">Pink fawn lily</name>
    <dbReference type="NCBI Taxonomy" id="202152"/>
    <lineage>
        <taxon>Eukaryota</taxon>
        <taxon>Viridiplantae</taxon>
        <taxon>Streptophyta</taxon>
        <taxon>Embryophyta</taxon>
        <taxon>Tracheophyta</taxon>
        <taxon>Spermatophyta</taxon>
        <taxon>Magnoliopsida</taxon>
        <taxon>Liliopsida</taxon>
        <taxon>Liliales</taxon>
        <taxon>Liliaceae</taxon>
        <taxon>Erythronium</taxon>
    </lineage>
</organism>
<comment type="function">
    <text evidence="1">Usually encoded in the trnK tRNA gene intron. Probably assists in splicing its own and other chloroplast group II introns.</text>
</comment>
<comment type="subcellular location">
    <subcellularLocation>
        <location>Plastid</location>
        <location>Chloroplast</location>
    </subcellularLocation>
</comment>
<comment type="similarity">
    <text evidence="1">Belongs to the intron maturase 2 family. MatK subfamily.</text>
</comment>
<proteinExistence type="inferred from homology"/>
<keyword id="KW-0150">Chloroplast</keyword>
<keyword id="KW-0507">mRNA processing</keyword>
<keyword id="KW-0934">Plastid</keyword>
<keyword id="KW-0694">RNA-binding</keyword>
<keyword id="KW-0819">tRNA processing</keyword>